<evidence type="ECO:0000256" key="1">
    <source>
        <dbReference type="SAM" id="MobiDB-lite"/>
    </source>
</evidence>
<evidence type="ECO:0000305" key="2"/>
<keyword id="KW-0326">Glycosidase</keyword>
<keyword id="KW-0378">Hydrolase</keyword>
<keyword id="KW-1185">Reference proteome</keyword>
<dbReference type="EC" id="3.2.1.-"/>
<dbReference type="EMBL" id="CH991544">
    <property type="protein sequence ID" value="EDQ92033.1"/>
    <property type="molecule type" value="Genomic_DNA"/>
</dbReference>
<dbReference type="RefSeq" id="XP_001743319.1">
    <property type="nucleotide sequence ID" value="XM_001743267.1"/>
</dbReference>
<dbReference type="EnsemblProtists" id="EDQ92033">
    <property type="protein sequence ID" value="EDQ92033"/>
    <property type="gene ID" value="MONBRDRAFT_22789"/>
</dbReference>
<dbReference type="KEGG" id="mbr:MONBRDRAFT_22789"/>
<dbReference type="eggNOG" id="ENOG502SHKS">
    <property type="taxonomic scope" value="Eukaryota"/>
</dbReference>
<dbReference type="InParanoid" id="A9US33"/>
<dbReference type="Proteomes" id="UP000001357">
    <property type="component" value="Unassembled WGS sequence"/>
</dbReference>
<dbReference type="GO" id="GO:0016798">
    <property type="term" value="F:hydrolase activity, acting on glycosyl bonds"/>
    <property type="evidence" value="ECO:0007669"/>
    <property type="project" value="UniProtKB-KW"/>
</dbReference>
<dbReference type="InterPro" id="IPR046226">
    <property type="entry name" value="DUF6259"/>
</dbReference>
<dbReference type="Pfam" id="PF19773">
    <property type="entry name" value="DUF6259"/>
    <property type="match status" value="1"/>
</dbReference>
<feature type="chain" id="PRO_0000408873" description="Putative glycoside hydrolase 22789">
    <location>
        <begin position="1"/>
        <end position="1191"/>
    </location>
</feature>
<feature type="region of interest" description="Disordered" evidence="1">
    <location>
        <begin position="173"/>
        <end position="221"/>
    </location>
</feature>
<feature type="compositionally biased region" description="Low complexity" evidence="1">
    <location>
        <begin position="173"/>
        <end position="187"/>
    </location>
</feature>
<proteinExistence type="inferred from homology"/>
<accession>A9US33</accession>
<name>GHL3_MONBE</name>
<sequence>MDPNNAAASSAHDLSSLDLSCLNEAERIVINSFMRGPHAHFEHLGVGPNVKWDENLSKRAFYHLVAINHATLKLLVAQARLCSMQQMNAPNLTNGASATALGSLHPFSLGNPATSVTMASNPLANGPGLRTQLMAPDFALALLGNGTTPHASAGLGALNPGLYNPSASILGGPSSSGASSVLPSPSAHTPDAATDANHLPNPDPASGRQELTRAGRPARKKMKATALDAALRTEMPNWPSVQDDFVRWTRLAWFEAGFASTISDGAIGVQTRRPFSPFLTTTFAQVGVHLPSMSPNLLRAFNSWVDMHLRSLRDHFKGRIDKPHAGKASLAARSLEDTTFVSLTEFINNMCNSYNLINSELSVAAVRALCKLYLNVRNMATAKDSEGVLRVHIRDASNRQPPNILRGTLPQDREDDDLLTLITECGAIDFDLPTDTSDTMALAVLMVMSTSATTLTLDQAGCFSSLSGAASAQVNLLTNVTCEWFSVTMVTESGTSTISLPSSTRPSAHISAHGKDFALSWPKITEGLEIDIGLTLELQHNVTLDAYELRAKVVNHRPKAKASLWQLELNLRNVRQPEDGSAFFPAGYGVRYQGAFAASGSYPSSGATMQWMAAGGGAANEGQGLYLAAHDGYGYIKFLNAAAVEDVASLSIVYLVEDAGLPFAESTMPFPLTLAVVGGGDDLWYQAAQMYRTFALGEAQWMQAGRLHQRQDIPGWYVNNSIWINSGWQCHDIFNETQGDPHTVLNVTRRIRERFNTNMALHWYEWQQGPDANASARYRFDTHYPDYLPPRGGDYFGTVVRELEKEGVHIFPYINGRIFDVASTSYAQHNGSDHCCRKANPSFGAADQSFYVESYGSGSTFHTADPTDIYWQTTLADTVDALVNTYGVEGVYIDQLAAAAPTPDWTSWHNHTKGGGFYWRTGIVDIIKAMRQRVGPTVPLVTESNSEPYMDAISGFLTLVAFEPAFVGTKALVPAFPAIYGGYFVGFGDIFNAEDLADQDPLMARVVAQFVYGAQLGWFSLGGVTSGPDVDTSCGKMGEYDLWMSESSDAIVAAVEYYGNLRVCLLEYLAHGRILAPPSLSPAPAEFMAVETAVQNAGPFPSAMSAVWLHEDEASAVIIVAGVLDAGQTYNVSVDLTFSLPSLHDRQVTVQEMSCDGLSQQLDVMPANDIQIYDVTLSDRNARVYRVHFGA</sequence>
<organism>
    <name type="scientific">Monosiga brevicollis</name>
    <name type="common">Choanoflagellate</name>
    <dbReference type="NCBI Taxonomy" id="81824"/>
    <lineage>
        <taxon>Eukaryota</taxon>
        <taxon>Choanoflagellata</taxon>
        <taxon>Craspedida</taxon>
        <taxon>Salpingoecidae</taxon>
        <taxon>Monosiga</taxon>
    </lineage>
</organism>
<protein>
    <recommendedName>
        <fullName>Putative glycoside hydrolase 22789</fullName>
        <ecNumber>3.2.1.-</ecNumber>
    </recommendedName>
</protein>
<comment type="similarity">
    <text evidence="2">Belongs to the glycoside hydrolase-like 3 (GHL3) family.</text>
</comment>
<reference key="1">
    <citation type="journal article" date="2008" name="Nature">
        <title>The genome of the choanoflagellate Monosiga brevicollis and the origin of metazoans.</title>
        <authorList>
            <consortium name="JGI Sequencing"/>
            <person name="King N."/>
            <person name="Westbrook M.J."/>
            <person name="Young S.L."/>
            <person name="Kuo A."/>
            <person name="Abedin M."/>
            <person name="Chapman J."/>
            <person name="Fairclough S."/>
            <person name="Hellsten U."/>
            <person name="Isogai Y."/>
            <person name="Letunic I."/>
            <person name="Marr M."/>
            <person name="Pincus D."/>
            <person name="Putnam N."/>
            <person name="Rokas A."/>
            <person name="Wright K.J."/>
            <person name="Zuzow R."/>
            <person name="Dirks W."/>
            <person name="Good M."/>
            <person name="Goodstein D."/>
            <person name="Lemons D."/>
            <person name="Li W."/>
            <person name="Lyons J.B."/>
            <person name="Morris A."/>
            <person name="Nichols S."/>
            <person name="Richter D.J."/>
            <person name="Salamov A."/>
            <person name="Bork P."/>
            <person name="Lim W.A."/>
            <person name="Manning G."/>
            <person name="Miller W.T."/>
            <person name="McGinnis W."/>
            <person name="Shapiro H."/>
            <person name="Tjian R."/>
            <person name="Grigoriev I.V."/>
            <person name="Rokhsar D."/>
        </authorList>
    </citation>
    <scope>NUCLEOTIDE SEQUENCE [LARGE SCALE GENOMIC DNA]</scope>
    <source>
        <strain>MX1 / ATCC 50154</strain>
    </source>
</reference>
<reference key="2">
    <citation type="journal article" date="2010" name="J. Bioinform. Comput. Biol.">
        <title>GH101 family of glycoside hydrolases: subfamily structure and evolutionary connections with other families.</title>
        <authorList>
            <person name="Naumoff D.G."/>
        </authorList>
    </citation>
    <scope>PUTATIVE FUNCTION</scope>
    <scope>FAMILY ASSIGNMENT</scope>
</reference>
<gene>
    <name type="ORF">22789</name>
</gene>